<accession>C3LS38</accession>
<proteinExistence type="inferred from homology"/>
<feature type="chain" id="PRO_1000123635" description="Translational regulator CsrA">
    <location>
        <begin position="1"/>
        <end position="65"/>
    </location>
</feature>
<protein>
    <recommendedName>
        <fullName evidence="1">Translational regulator CsrA</fullName>
    </recommendedName>
    <alternativeName>
        <fullName evidence="1">Carbon storage regulator</fullName>
    </alternativeName>
</protein>
<evidence type="ECO:0000255" key="1">
    <source>
        <dbReference type="HAMAP-Rule" id="MF_00167"/>
    </source>
</evidence>
<gene>
    <name evidence="1" type="primary">csrA</name>
    <name type="ordered locus">VCM66_0506</name>
</gene>
<dbReference type="EMBL" id="CP001233">
    <property type="protein sequence ID" value="ACP04831.1"/>
    <property type="molecule type" value="Genomic_DNA"/>
</dbReference>
<dbReference type="RefSeq" id="WP_000906485.1">
    <property type="nucleotide sequence ID" value="NC_012578.1"/>
</dbReference>
<dbReference type="SMR" id="C3LS38"/>
<dbReference type="GeneID" id="94014678"/>
<dbReference type="KEGG" id="vcm:VCM66_0506"/>
<dbReference type="HOGENOM" id="CLU_164837_2_1_6"/>
<dbReference type="Proteomes" id="UP000001217">
    <property type="component" value="Chromosome I"/>
</dbReference>
<dbReference type="GO" id="GO:0005829">
    <property type="term" value="C:cytosol"/>
    <property type="evidence" value="ECO:0007669"/>
    <property type="project" value="TreeGrafter"/>
</dbReference>
<dbReference type="GO" id="GO:0048027">
    <property type="term" value="F:mRNA 5'-UTR binding"/>
    <property type="evidence" value="ECO:0007669"/>
    <property type="project" value="UniProtKB-UniRule"/>
</dbReference>
<dbReference type="GO" id="GO:0006402">
    <property type="term" value="P:mRNA catabolic process"/>
    <property type="evidence" value="ECO:0007669"/>
    <property type="project" value="InterPro"/>
</dbReference>
<dbReference type="GO" id="GO:0045947">
    <property type="term" value="P:negative regulation of translational initiation"/>
    <property type="evidence" value="ECO:0007669"/>
    <property type="project" value="UniProtKB-UniRule"/>
</dbReference>
<dbReference type="GO" id="GO:0045948">
    <property type="term" value="P:positive regulation of translational initiation"/>
    <property type="evidence" value="ECO:0007669"/>
    <property type="project" value="UniProtKB-UniRule"/>
</dbReference>
<dbReference type="GO" id="GO:0006109">
    <property type="term" value="P:regulation of carbohydrate metabolic process"/>
    <property type="evidence" value="ECO:0007669"/>
    <property type="project" value="UniProtKB-UniRule"/>
</dbReference>
<dbReference type="FunFam" id="2.60.40.4380:FF:000001">
    <property type="entry name" value="Translational regulator CsrA"/>
    <property type="match status" value="1"/>
</dbReference>
<dbReference type="Gene3D" id="2.60.40.4380">
    <property type="entry name" value="Translational regulator CsrA"/>
    <property type="match status" value="1"/>
</dbReference>
<dbReference type="HAMAP" id="MF_00167">
    <property type="entry name" value="CsrA"/>
    <property type="match status" value="1"/>
</dbReference>
<dbReference type="InterPro" id="IPR003751">
    <property type="entry name" value="CsrA"/>
</dbReference>
<dbReference type="InterPro" id="IPR036107">
    <property type="entry name" value="CsrA_sf"/>
</dbReference>
<dbReference type="NCBIfam" id="TIGR00202">
    <property type="entry name" value="csrA"/>
    <property type="match status" value="1"/>
</dbReference>
<dbReference type="NCBIfam" id="NF002469">
    <property type="entry name" value="PRK01712.1"/>
    <property type="match status" value="1"/>
</dbReference>
<dbReference type="PANTHER" id="PTHR34984">
    <property type="entry name" value="CARBON STORAGE REGULATOR"/>
    <property type="match status" value="1"/>
</dbReference>
<dbReference type="PANTHER" id="PTHR34984:SF1">
    <property type="entry name" value="CARBON STORAGE REGULATOR"/>
    <property type="match status" value="1"/>
</dbReference>
<dbReference type="Pfam" id="PF02599">
    <property type="entry name" value="CsrA"/>
    <property type="match status" value="1"/>
</dbReference>
<dbReference type="SUPFAM" id="SSF117130">
    <property type="entry name" value="CsrA-like"/>
    <property type="match status" value="1"/>
</dbReference>
<name>CSRA_VIBCM</name>
<organism>
    <name type="scientific">Vibrio cholerae serotype O1 (strain M66-2)</name>
    <dbReference type="NCBI Taxonomy" id="579112"/>
    <lineage>
        <taxon>Bacteria</taxon>
        <taxon>Pseudomonadati</taxon>
        <taxon>Pseudomonadota</taxon>
        <taxon>Gammaproteobacteria</taxon>
        <taxon>Vibrionales</taxon>
        <taxon>Vibrionaceae</taxon>
        <taxon>Vibrio</taxon>
    </lineage>
</organism>
<reference key="1">
    <citation type="journal article" date="2008" name="PLoS ONE">
        <title>A recalibrated molecular clock and independent origins for the cholera pandemic clones.</title>
        <authorList>
            <person name="Feng L."/>
            <person name="Reeves P.R."/>
            <person name="Lan R."/>
            <person name="Ren Y."/>
            <person name="Gao C."/>
            <person name="Zhou Z."/>
            <person name="Ren Y."/>
            <person name="Cheng J."/>
            <person name="Wang W."/>
            <person name="Wang J."/>
            <person name="Qian W."/>
            <person name="Li D."/>
            <person name="Wang L."/>
        </authorList>
    </citation>
    <scope>NUCLEOTIDE SEQUENCE [LARGE SCALE GENOMIC DNA]</scope>
    <source>
        <strain>M66-2</strain>
    </source>
</reference>
<sequence>MLILTRRVGETLMIGDEVTVTVLGVKGNQVRIGVNAPKEVSVHREEIYMRIQAEKGNGGVASGNY</sequence>
<comment type="function">
    <text evidence="1">A key translational regulator that binds mRNA to regulate translation initiation and/or mRNA stability. Mediates global changes in gene expression, shifting from rapid growth to stress survival by linking envelope stress, the stringent response and the catabolite repression systems. Usually binds in the 5'-UTR; binding at or near the Shine-Dalgarno sequence prevents ribosome-binding, repressing translation, binding elsewhere in the 5'-UTR can activate translation and/or stabilize the mRNA. Its function is antagonized by small RNA(s).</text>
</comment>
<comment type="subunit">
    <text evidence="1">Homodimer; the beta-strands of each monomer intercalate to form a hydrophobic core, while the alpha-helices form wings that extend away from the core.</text>
</comment>
<comment type="subcellular location">
    <subcellularLocation>
        <location evidence="1">Cytoplasm</location>
    </subcellularLocation>
</comment>
<comment type="similarity">
    <text evidence="1">Belongs to the CsrA/RsmA family.</text>
</comment>
<keyword id="KW-0010">Activator</keyword>
<keyword id="KW-0963">Cytoplasm</keyword>
<keyword id="KW-0678">Repressor</keyword>
<keyword id="KW-0694">RNA-binding</keyword>
<keyword id="KW-0810">Translation regulation</keyword>